<accession>B8IS84</accession>
<protein>
    <recommendedName>
        <fullName evidence="1">Small ribosomal subunit protein uS10</fullName>
    </recommendedName>
    <alternativeName>
        <fullName evidence="2">30S ribosomal protein S10</fullName>
    </alternativeName>
</protein>
<organism>
    <name type="scientific">Methylobacterium nodulans (strain LMG 21967 / CNCM I-2342 / ORS 2060)</name>
    <dbReference type="NCBI Taxonomy" id="460265"/>
    <lineage>
        <taxon>Bacteria</taxon>
        <taxon>Pseudomonadati</taxon>
        <taxon>Pseudomonadota</taxon>
        <taxon>Alphaproteobacteria</taxon>
        <taxon>Hyphomicrobiales</taxon>
        <taxon>Methylobacteriaceae</taxon>
        <taxon>Methylobacterium</taxon>
    </lineage>
</organism>
<feature type="chain" id="PRO_1000146063" description="Small ribosomal subunit protein uS10">
    <location>
        <begin position="1"/>
        <end position="102"/>
    </location>
</feature>
<name>RS10_METNO</name>
<reference key="1">
    <citation type="submission" date="2009-01" db="EMBL/GenBank/DDBJ databases">
        <title>Complete sequence of chromosome of Methylobacterium nodulans ORS 2060.</title>
        <authorList>
            <consortium name="US DOE Joint Genome Institute"/>
            <person name="Lucas S."/>
            <person name="Copeland A."/>
            <person name="Lapidus A."/>
            <person name="Glavina del Rio T."/>
            <person name="Dalin E."/>
            <person name="Tice H."/>
            <person name="Bruce D."/>
            <person name="Goodwin L."/>
            <person name="Pitluck S."/>
            <person name="Sims D."/>
            <person name="Brettin T."/>
            <person name="Detter J.C."/>
            <person name="Han C."/>
            <person name="Larimer F."/>
            <person name="Land M."/>
            <person name="Hauser L."/>
            <person name="Kyrpides N."/>
            <person name="Ivanova N."/>
            <person name="Marx C.J."/>
            <person name="Richardson P."/>
        </authorList>
    </citation>
    <scope>NUCLEOTIDE SEQUENCE [LARGE SCALE GENOMIC DNA]</scope>
    <source>
        <strain>LMG 21967 / CNCM I-2342 / ORS 2060</strain>
    </source>
</reference>
<keyword id="KW-1185">Reference proteome</keyword>
<keyword id="KW-0687">Ribonucleoprotein</keyword>
<keyword id="KW-0689">Ribosomal protein</keyword>
<gene>
    <name evidence="1" type="primary">rpsJ</name>
    <name type="ordered locus">Mnod_1907</name>
</gene>
<comment type="function">
    <text evidence="1">Involved in the binding of tRNA to the ribosomes.</text>
</comment>
<comment type="subunit">
    <text evidence="1">Part of the 30S ribosomal subunit.</text>
</comment>
<comment type="similarity">
    <text evidence="1">Belongs to the universal ribosomal protein uS10 family.</text>
</comment>
<sequence>MNGQNIRIRLKAFDHRILDSSTREIVSTAKRTGAQVRGPIPLPTRIERFTVNRSPHIDKKSREQFEMRTHKRVLDIVDPTPQTVDALMKLDLAAGVDVEIKL</sequence>
<proteinExistence type="inferred from homology"/>
<evidence type="ECO:0000255" key="1">
    <source>
        <dbReference type="HAMAP-Rule" id="MF_00508"/>
    </source>
</evidence>
<evidence type="ECO:0000305" key="2"/>
<dbReference type="EMBL" id="CP001349">
    <property type="protein sequence ID" value="ACL56896.1"/>
    <property type="molecule type" value="Genomic_DNA"/>
</dbReference>
<dbReference type="RefSeq" id="WP_012330343.1">
    <property type="nucleotide sequence ID" value="NC_011894.1"/>
</dbReference>
<dbReference type="SMR" id="B8IS84"/>
<dbReference type="STRING" id="460265.Mnod_1907"/>
<dbReference type="KEGG" id="mno:Mnod_1907"/>
<dbReference type="eggNOG" id="COG0051">
    <property type="taxonomic scope" value="Bacteria"/>
</dbReference>
<dbReference type="HOGENOM" id="CLU_122625_1_3_5"/>
<dbReference type="OrthoDB" id="9804464at2"/>
<dbReference type="Proteomes" id="UP000008207">
    <property type="component" value="Chromosome"/>
</dbReference>
<dbReference type="GO" id="GO:1990904">
    <property type="term" value="C:ribonucleoprotein complex"/>
    <property type="evidence" value="ECO:0007669"/>
    <property type="project" value="UniProtKB-KW"/>
</dbReference>
<dbReference type="GO" id="GO:0005840">
    <property type="term" value="C:ribosome"/>
    <property type="evidence" value="ECO:0007669"/>
    <property type="project" value="UniProtKB-KW"/>
</dbReference>
<dbReference type="GO" id="GO:0003735">
    <property type="term" value="F:structural constituent of ribosome"/>
    <property type="evidence" value="ECO:0007669"/>
    <property type="project" value="InterPro"/>
</dbReference>
<dbReference type="GO" id="GO:0000049">
    <property type="term" value="F:tRNA binding"/>
    <property type="evidence" value="ECO:0007669"/>
    <property type="project" value="UniProtKB-UniRule"/>
</dbReference>
<dbReference type="GO" id="GO:0006412">
    <property type="term" value="P:translation"/>
    <property type="evidence" value="ECO:0007669"/>
    <property type="project" value="UniProtKB-UniRule"/>
</dbReference>
<dbReference type="FunFam" id="3.30.70.600:FF:000001">
    <property type="entry name" value="30S ribosomal protein S10"/>
    <property type="match status" value="1"/>
</dbReference>
<dbReference type="Gene3D" id="3.30.70.600">
    <property type="entry name" value="Ribosomal protein S10 domain"/>
    <property type="match status" value="1"/>
</dbReference>
<dbReference type="HAMAP" id="MF_00508">
    <property type="entry name" value="Ribosomal_uS10"/>
    <property type="match status" value="1"/>
</dbReference>
<dbReference type="InterPro" id="IPR001848">
    <property type="entry name" value="Ribosomal_uS10"/>
</dbReference>
<dbReference type="InterPro" id="IPR018268">
    <property type="entry name" value="Ribosomal_uS10_CS"/>
</dbReference>
<dbReference type="InterPro" id="IPR027486">
    <property type="entry name" value="Ribosomal_uS10_dom"/>
</dbReference>
<dbReference type="InterPro" id="IPR036838">
    <property type="entry name" value="Ribosomal_uS10_dom_sf"/>
</dbReference>
<dbReference type="NCBIfam" id="NF001861">
    <property type="entry name" value="PRK00596.1"/>
    <property type="match status" value="1"/>
</dbReference>
<dbReference type="NCBIfam" id="TIGR01049">
    <property type="entry name" value="rpsJ_bact"/>
    <property type="match status" value="1"/>
</dbReference>
<dbReference type="PANTHER" id="PTHR11700">
    <property type="entry name" value="30S RIBOSOMAL PROTEIN S10 FAMILY MEMBER"/>
    <property type="match status" value="1"/>
</dbReference>
<dbReference type="Pfam" id="PF00338">
    <property type="entry name" value="Ribosomal_S10"/>
    <property type="match status" value="1"/>
</dbReference>
<dbReference type="PRINTS" id="PR00971">
    <property type="entry name" value="RIBOSOMALS10"/>
</dbReference>
<dbReference type="SMART" id="SM01403">
    <property type="entry name" value="Ribosomal_S10"/>
    <property type="match status" value="1"/>
</dbReference>
<dbReference type="SUPFAM" id="SSF54999">
    <property type="entry name" value="Ribosomal protein S10"/>
    <property type="match status" value="1"/>
</dbReference>
<dbReference type="PROSITE" id="PS00361">
    <property type="entry name" value="RIBOSOMAL_S10"/>
    <property type="match status" value="1"/>
</dbReference>